<reference key="1">
    <citation type="journal article" date="2000" name="Genomics">
        <title>Molecular cloning of a novel NF2/ERM/4.1 superfamily gene, Ehm2, that is expressed in high-metastatic K1735 murine melanoma cells.</title>
        <authorList>
            <person name="Shimizu K."/>
            <person name="Nagamachi Y."/>
            <person name="Tani M."/>
            <person name="Kimura K."/>
            <person name="Shiroishi T."/>
            <person name="Wakana S."/>
            <person name="Yokota J."/>
        </authorList>
    </citation>
    <scope>NUCLEOTIDE SEQUENCE [MRNA]</scope>
    <scope>TISSUE SPECIFICITY</scope>
</reference>
<reference key="2">
    <citation type="journal article" date="2009" name="PLoS Biol.">
        <title>Lineage-specific biology revealed by a finished genome assembly of the mouse.</title>
        <authorList>
            <person name="Church D.M."/>
            <person name="Goodstadt L."/>
            <person name="Hillier L.W."/>
            <person name="Zody M.C."/>
            <person name="Goldstein S."/>
            <person name="She X."/>
            <person name="Bult C.J."/>
            <person name="Agarwala R."/>
            <person name="Cherry J.L."/>
            <person name="DiCuccio M."/>
            <person name="Hlavina W."/>
            <person name="Kapustin Y."/>
            <person name="Meric P."/>
            <person name="Maglott D."/>
            <person name="Birtle Z."/>
            <person name="Marques A.C."/>
            <person name="Graves T."/>
            <person name="Zhou S."/>
            <person name="Teague B."/>
            <person name="Potamousis K."/>
            <person name="Churas C."/>
            <person name="Place M."/>
            <person name="Herschleb J."/>
            <person name="Runnheim R."/>
            <person name="Forrest D."/>
            <person name="Amos-Landgraf J."/>
            <person name="Schwartz D.C."/>
            <person name="Cheng Z."/>
            <person name="Lindblad-Toh K."/>
            <person name="Eichler E.E."/>
            <person name="Ponting C.P."/>
        </authorList>
    </citation>
    <scope>NUCLEOTIDE SEQUENCE [LARGE SCALE GENOMIC DNA]</scope>
    <source>
        <strain>C57BL/6J</strain>
    </source>
</reference>
<reference key="3">
    <citation type="journal article" date="2011" name="J. Cell Biol.">
        <title>Lulu2 regulates the circumferential actomyosin tensile system in epithelial cells through p114RhoGEF.</title>
        <authorList>
            <person name="Nakajima H."/>
            <person name="Tanoue T."/>
        </authorList>
    </citation>
    <scope>FUNCTION</scope>
    <scope>INTERACTION WITH ARHGEF18</scope>
    <scope>PHOSPHORYLATION</scope>
    <scope>MUTAGENESIS OF SER-385; SER-414; SER-419 AND THR-424</scope>
</reference>
<protein>
    <recommendedName>
        <fullName>Band 4.1-like protein 4B</fullName>
    </recommendedName>
    <alternativeName>
        <fullName evidence="7">Erythrocyte membrane protein band 4.1-like 4B</fullName>
    </alternativeName>
    <alternativeName>
        <fullName>Protein EHM2</fullName>
    </alternativeName>
</protein>
<organism>
    <name type="scientific">Mus musculus</name>
    <name type="common">Mouse</name>
    <dbReference type="NCBI Taxonomy" id="10090"/>
    <lineage>
        <taxon>Eukaryota</taxon>
        <taxon>Metazoa</taxon>
        <taxon>Chordata</taxon>
        <taxon>Craniata</taxon>
        <taxon>Vertebrata</taxon>
        <taxon>Euteleostomi</taxon>
        <taxon>Mammalia</taxon>
        <taxon>Eutheria</taxon>
        <taxon>Euarchontoglires</taxon>
        <taxon>Glires</taxon>
        <taxon>Rodentia</taxon>
        <taxon>Myomorpha</taxon>
        <taxon>Muroidea</taxon>
        <taxon>Muridae</taxon>
        <taxon>Murinae</taxon>
        <taxon>Mus</taxon>
        <taxon>Mus</taxon>
    </lineage>
</organism>
<evidence type="ECO:0000250" key="1">
    <source>
        <dbReference type="UniProtKB" id="Q9H329"/>
    </source>
</evidence>
<evidence type="ECO:0000255" key="2">
    <source>
        <dbReference type="PROSITE-ProRule" id="PRU00084"/>
    </source>
</evidence>
<evidence type="ECO:0000256" key="3">
    <source>
        <dbReference type="SAM" id="MobiDB-lite"/>
    </source>
</evidence>
<evidence type="ECO:0000269" key="4">
    <source>
    </source>
</evidence>
<evidence type="ECO:0000269" key="5">
    <source>
    </source>
</evidence>
<evidence type="ECO:0000305" key="6"/>
<evidence type="ECO:0000312" key="7">
    <source>
        <dbReference type="MGI" id="MGI:1859149"/>
    </source>
</evidence>
<accession>Q9JMC8</accession>
<accession>A2ALK7</accession>
<feature type="chain" id="PRO_0000219405" description="Band 4.1-like protein 4B">
    <location>
        <begin position="1"/>
        <end position="527"/>
    </location>
</feature>
<feature type="domain" description="FERM" evidence="2">
    <location>
        <begin position="85"/>
        <end position="369"/>
    </location>
</feature>
<feature type="region of interest" description="Disordered" evidence="3">
    <location>
        <begin position="23"/>
        <end position="47"/>
    </location>
</feature>
<feature type="region of interest" description="Disordered" evidence="3">
    <location>
        <begin position="400"/>
        <end position="425"/>
    </location>
</feature>
<feature type="region of interest" description="Disordered" evidence="3">
    <location>
        <begin position="453"/>
        <end position="482"/>
    </location>
</feature>
<feature type="compositionally biased region" description="Basic residues" evidence="3">
    <location>
        <begin position="413"/>
        <end position="424"/>
    </location>
</feature>
<feature type="compositionally biased region" description="Polar residues" evidence="3">
    <location>
        <begin position="467"/>
        <end position="476"/>
    </location>
</feature>
<feature type="mutagenesis site" description="Abolishes in vitro phosphorylation." evidence="5">
    <original>S</original>
    <variation>A</variation>
    <location>
        <position position="385"/>
    </location>
</feature>
<feature type="mutagenesis site" description="Abolishes in vitro phosphorylation." evidence="5">
    <original>S</original>
    <variation>A</variation>
    <location>
        <position position="414"/>
    </location>
</feature>
<feature type="mutagenesis site" description="Abolishes in vitro phosphorylation." evidence="5">
    <original>S</original>
    <variation>A</variation>
    <location>
        <position position="419"/>
    </location>
</feature>
<feature type="mutagenesis site" description="Abolishes in vitro phosphorylation." evidence="5">
    <original>T</original>
    <variation>A</variation>
    <location>
        <position position="424"/>
    </location>
</feature>
<feature type="sequence conflict" description="In Ref. 1; BAA96078." evidence="6" ref="1">
    <original>V</original>
    <variation>I</variation>
    <location>
        <position position="431"/>
    </location>
</feature>
<comment type="function">
    <text evidence="1 5">Up-regulates the activity of the Rho guanine nucleotide exchange factor ARHGEF18 (PubMed:22006950). Involved in the regulation of the circumferential actomyosin belt in epithelial cells (PubMed:22006950). Promotes cellular adhesion, migration and motility in vitro and may play a role in wound healing (By similarity). May have a role in mediating cytoskeletal changes associated with steroid-induced cell differentiation (By similarity).</text>
</comment>
<comment type="subunit">
    <text evidence="5">Interacts (via FERM domain) with ARHGEF18 (via C-terminus); the interaction activates ARHGEF18.</text>
</comment>
<comment type="subcellular location">
    <subcellularLocation>
        <location evidence="1">Cytoplasm</location>
    </subcellularLocation>
    <subcellularLocation>
        <location evidence="1">Cell junction</location>
        <location evidence="1">Tight junction</location>
    </subcellularLocation>
    <text evidence="1">Accumulates along apical cell-cell boundaries and is also detected in the cytoplasm in a punctate manner.</text>
</comment>
<comment type="tissue specificity">
    <text evidence="4">Expressed in mouse liver cells, with lower amounts in lung, kidney and in 7- to 17-day embryos. Expression not detected in adult mouse heart, brain, spleen, skeletal muscle or testis.</text>
</comment>
<comment type="PTM">
    <text evidence="5">May be negatively regulated by phosphorylation.</text>
</comment>
<dbReference type="EMBL" id="AB032366">
    <property type="protein sequence ID" value="BAA96078.1"/>
    <property type="molecule type" value="mRNA"/>
</dbReference>
<dbReference type="EMBL" id="AL805921">
    <property type="status" value="NOT_ANNOTATED_CDS"/>
    <property type="molecule type" value="Genomic_DNA"/>
</dbReference>
<dbReference type="EMBL" id="AL831761">
    <property type="status" value="NOT_ANNOTATED_CDS"/>
    <property type="molecule type" value="Genomic_DNA"/>
</dbReference>
<dbReference type="CCDS" id="CCDS51180.1"/>
<dbReference type="RefSeq" id="NP_062300.2">
    <property type="nucleotide sequence ID" value="NM_019427.3"/>
</dbReference>
<dbReference type="SMR" id="Q9JMC8"/>
<dbReference type="BioGRID" id="207621">
    <property type="interactions" value="2"/>
</dbReference>
<dbReference type="FunCoup" id="Q9JMC8">
    <property type="interactions" value="522"/>
</dbReference>
<dbReference type="STRING" id="10090.ENSMUSP00000030142"/>
<dbReference type="GlyGen" id="Q9JMC8">
    <property type="glycosylation" value="1 site, 1 O-linked glycan (1 site)"/>
</dbReference>
<dbReference type="iPTMnet" id="Q9JMC8"/>
<dbReference type="PhosphoSitePlus" id="Q9JMC8"/>
<dbReference type="jPOST" id="Q9JMC8"/>
<dbReference type="PaxDb" id="10090-ENSMUSP00000030142"/>
<dbReference type="PeptideAtlas" id="Q9JMC8"/>
<dbReference type="ProteomicsDB" id="277541"/>
<dbReference type="Antibodypedia" id="29426">
    <property type="antibodies" value="78 antibodies from 22 providers"/>
</dbReference>
<dbReference type="Ensembl" id="ENSMUST00000030142.4">
    <property type="protein sequence ID" value="ENSMUSP00000030142.4"/>
    <property type="gene ID" value="ENSMUSG00000028434.13"/>
</dbReference>
<dbReference type="GeneID" id="54357"/>
<dbReference type="KEGG" id="mmu:54357"/>
<dbReference type="UCSC" id="uc008sxy.2">
    <property type="organism name" value="mouse"/>
</dbReference>
<dbReference type="AGR" id="MGI:1859149"/>
<dbReference type="CTD" id="54566"/>
<dbReference type="MGI" id="MGI:1859149">
    <property type="gene designation" value="Epb41l4b"/>
</dbReference>
<dbReference type="VEuPathDB" id="HostDB:ENSMUSG00000028434"/>
<dbReference type="eggNOG" id="KOG3530">
    <property type="taxonomic scope" value="Eukaryota"/>
</dbReference>
<dbReference type="GeneTree" id="ENSGT00940000158331"/>
<dbReference type="HOGENOM" id="CLU_003623_1_0_1"/>
<dbReference type="InParanoid" id="Q9JMC8"/>
<dbReference type="OMA" id="CPADGMD"/>
<dbReference type="OrthoDB" id="6235974at2759"/>
<dbReference type="TreeFam" id="TF319780"/>
<dbReference type="BioGRID-ORCS" id="54357">
    <property type="hits" value="3 hits in 44 CRISPR screens"/>
</dbReference>
<dbReference type="ChiTaRS" id="Epb41l4b">
    <property type="organism name" value="mouse"/>
</dbReference>
<dbReference type="PRO" id="PR:Q9JMC8"/>
<dbReference type="Proteomes" id="UP000000589">
    <property type="component" value="Chromosome 4"/>
</dbReference>
<dbReference type="RNAct" id="Q9JMC8">
    <property type="molecule type" value="protein"/>
</dbReference>
<dbReference type="Bgee" id="ENSMUSG00000028434">
    <property type="expression patterns" value="Expressed in pyloric antrum and 232 other cell types or tissues"/>
</dbReference>
<dbReference type="ExpressionAtlas" id="Q9JMC8">
    <property type="expression patterns" value="baseline and differential"/>
</dbReference>
<dbReference type="GO" id="GO:0045177">
    <property type="term" value="C:apical part of cell"/>
    <property type="evidence" value="ECO:0000266"/>
    <property type="project" value="MGI"/>
</dbReference>
<dbReference type="GO" id="GO:0005923">
    <property type="term" value="C:bicellular tight junction"/>
    <property type="evidence" value="ECO:0007669"/>
    <property type="project" value="UniProtKB-SubCell"/>
</dbReference>
<dbReference type="GO" id="GO:0005737">
    <property type="term" value="C:cytoplasm"/>
    <property type="evidence" value="ECO:0007669"/>
    <property type="project" value="UniProtKB-SubCell"/>
</dbReference>
<dbReference type="GO" id="GO:0005856">
    <property type="term" value="C:cytoskeleton"/>
    <property type="evidence" value="ECO:0007669"/>
    <property type="project" value="InterPro"/>
</dbReference>
<dbReference type="GO" id="GO:0008092">
    <property type="term" value="F:cytoskeletal protein binding"/>
    <property type="evidence" value="ECO:0007669"/>
    <property type="project" value="InterPro"/>
</dbReference>
<dbReference type="GO" id="GO:0031032">
    <property type="term" value="P:actomyosin structure organization"/>
    <property type="evidence" value="ECO:0000266"/>
    <property type="project" value="MGI"/>
</dbReference>
<dbReference type="CDD" id="cd14473">
    <property type="entry name" value="FERM_B-lobe"/>
    <property type="match status" value="1"/>
</dbReference>
<dbReference type="CDD" id="cd13186">
    <property type="entry name" value="FERM_C_NBL4_NBL5"/>
    <property type="match status" value="1"/>
</dbReference>
<dbReference type="CDD" id="cd17204">
    <property type="entry name" value="FERM_F1_EPB41L4B"/>
    <property type="match status" value="1"/>
</dbReference>
<dbReference type="FunFam" id="2.30.29.30:FF:000002">
    <property type="entry name" value="Band 4.1-like protein 5 isoform 1"/>
    <property type="match status" value="1"/>
</dbReference>
<dbReference type="FunFam" id="3.10.20.90:FF:000024">
    <property type="entry name" value="Erythrocyte membrane protein band 4.1-like 5"/>
    <property type="match status" value="1"/>
</dbReference>
<dbReference type="FunFam" id="1.20.80.10:FF:000003">
    <property type="entry name" value="Tyrosine-protein phosphatase non-receptor type 4"/>
    <property type="match status" value="1"/>
</dbReference>
<dbReference type="Gene3D" id="1.20.80.10">
    <property type="match status" value="1"/>
</dbReference>
<dbReference type="Gene3D" id="3.10.20.90">
    <property type="entry name" value="Phosphatidylinositol 3-kinase Catalytic Subunit, Chain A, domain 1"/>
    <property type="match status" value="1"/>
</dbReference>
<dbReference type="Gene3D" id="2.30.29.30">
    <property type="entry name" value="Pleckstrin-homology domain (PH domain)/Phosphotyrosine-binding domain (PTB)"/>
    <property type="match status" value="1"/>
</dbReference>
<dbReference type="InterPro" id="IPR019749">
    <property type="entry name" value="Band_41_domain"/>
</dbReference>
<dbReference type="InterPro" id="IPR030698">
    <property type="entry name" value="EHM2_FERM_F1"/>
</dbReference>
<dbReference type="InterPro" id="IPR000798">
    <property type="entry name" value="Ez/rad/moesin-like"/>
</dbReference>
<dbReference type="InterPro" id="IPR014847">
    <property type="entry name" value="FA"/>
</dbReference>
<dbReference type="InterPro" id="IPR014352">
    <property type="entry name" value="FERM/acyl-CoA-bd_prot_sf"/>
</dbReference>
<dbReference type="InterPro" id="IPR035963">
    <property type="entry name" value="FERM_2"/>
</dbReference>
<dbReference type="InterPro" id="IPR019748">
    <property type="entry name" value="FERM_central"/>
</dbReference>
<dbReference type="InterPro" id="IPR019747">
    <property type="entry name" value="FERM_CS"/>
</dbReference>
<dbReference type="InterPro" id="IPR000299">
    <property type="entry name" value="FERM_domain"/>
</dbReference>
<dbReference type="InterPro" id="IPR018979">
    <property type="entry name" value="FERM_N"/>
</dbReference>
<dbReference type="InterPro" id="IPR018980">
    <property type="entry name" value="FERM_PH-like_C"/>
</dbReference>
<dbReference type="InterPro" id="IPR011993">
    <property type="entry name" value="PH-like_dom_sf"/>
</dbReference>
<dbReference type="InterPro" id="IPR029071">
    <property type="entry name" value="Ubiquitin-like_domsf"/>
</dbReference>
<dbReference type="PANTHER" id="PTHR23280">
    <property type="entry name" value="4.1 G PROTEIN"/>
    <property type="match status" value="1"/>
</dbReference>
<dbReference type="PANTHER" id="PTHR23280:SF18">
    <property type="entry name" value="BAND 4.1-LIKE PROTEIN 4B"/>
    <property type="match status" value="1"/>
</dbReference>
<dbReference type="Pfam" id="PF08736">
    <property type="entry name" value="FA"/>
    <property type="match status" value="1"/>
</dbReference>
<dbReference type="Pfam" id="PF09380">
    <property type="entry name" value="FERM_C"/>
    <property type="match status" value="1"/>
</dbReference>
<dbReference type="Pfam" id="PF00373">
    <property type="entry name" value="FERM_M"/>
    <property type="match status" value="1"/>
</dbReference>
<dbReference type="Pfam" id="PF09379">
    <property type="entry name" value="FERM_N"/>
    <property type="match status" value="1"/>
</dbReference>
<dbReference type="PRINTS" id="PR00935">
    <property type="entry name" value="BAND41"/>
</dbReference>
<dbReference type="PRINTS" id="PR00661">
    <property type="entry name" value="ERMFAMILY"/>
</dbReference>
<dbReference type="SMART" id="SM00295">
    <property type="entry name" value="B41"/>
    <property type="match status" value="1"/>
</dbReference>
<dbReference type="SMART" id="SM01195">
    <property type="entry name" value="FA"/>
    <property type="match status" value="1"/>
</dbReference>
<dbReference type="SMART" id="SM01196">
    <property type="entry name" value="FERM_C"/>
    <property type="match status" value="1"/>
</dbReference>
<dbReference type="SUPFAM" id="SSF50729">
    <property type="entry name" value="PH domain-like"/>
    <property type="match status" value="1"/>
</dbReference>
<dbReference type="SUPFAM" id="SSF47031">
    <property type="entry name" value="Second domain of FERM"/>
    <property type="match status" value="1"/>
</dbReference>
<dbReference type="SUPFAM" id="SSF54236">
    <property type="entry name" value="Ubiquitin-like"/>
    <property type="match status" value="1"/>
</dbReference>
<dbReference type="PROSITE" id="PS00661">
    <property type="entry name" value="FERM_2"/>
    <property type="match status" value="1"/>
</dbReference>
<dbReference type="PROSITE" id="PS50057">
    <property type="entry name" value="FERM_3"/>
    <property type="match status" value="1"/>
</dbReference>
<sequence>MLRFLRRTFGRRSMQRYARGAAGRGAAGLGDERDGGPRGGPAAAASSSVLPAAPGGSVFPAGGGPLLTGGAAVHISASGAAKATLYCRVFLLDGTEVSVDLPKHAKGQDLFDQIVYHLDLVETDYFGLQFLDSAQVTHWLDHAKPIKKQMKVGPAYALHFRVKYYSSEPNNLREEFTRYLFVLQLRHDILSGKLKCPYETAVELAALCLQAELGECELPEHTPELVSEFRFIPNQTEAMEFDIFQRWKEYRGKSPAQAELSYLNKAKWLEMYGVDMHVVRGRDGCEYSLGLTPTGILIFEGANKIGLFFWPKITKMDFKKSKLTLVVVEDDDQGREQEHTFVFRLDSARTCKHLWKCAVEHHAFFRLRTPSNSKSARSDFIRLGSRFRFSGRTEYQATHGSRLRRTSTFERKPSKRYPSRRHSTFKASNPVIAAQLCSKANPEVHNYQPQYHPDVHPSQPRWRPHSPNVSNHSICKQNKPCFQDDRPHWKTSASGDGSHFDYVQDQNQRNLGGAYSVTYRDKLMTAL</sequence>
<proteinExistence type="evidence at protein level"/>
<keyword id="KW-0965">Cell junction</keyword>
<keyword id="KW-0963">Cytoplasm</keyword>
<keyword id="KW-0597">Phosphoprotein</keyword>
<keyword id="KW-1185">Reference proteome</keyword>
<keyword id="KW-0796">Tight junction</keyword>
<gene>
    <name evidence="7" type="primary">Epb41l4b</name>
    <name evidence="7" type="synonym">Ehm2</name>
    <name evidence="7" type="synonym">Epb4.1l4b</name>
    <name evidence="1" type="synonym">Lulu2</name>
</gene>
<name>E41LB_MOUSE</name>